<organism>
    <name type="scientific">Pyrococcus furiosus (strain ATCC 43587 / DSM 3638 / JCM 8422 / Vc1)</name>
    <dbReference type="NCBI Taxonomy" id="186497"/>
    <lineage>
        <taxon>Archaea</taxon>
        <taxon>Methanobacteriati</taxon>
        <taxon>Methanobacteriota</taxon>
        <taxon>Thermococci</taxon>
        <taxon>Thermococcales</taxon>
        <taxon>Thermococcaceae</taxon>
        <taxon>Pyrococcus</taxon>
    </lineage>
</organism>
<proteinExistence type="inferred from homology"/>
<comment type="function">
    <text evidence="1">Component of the proteasome core, a large protease complex with broad specificity involved in protein degradation.</text>
</comment>
<comment type="catalytic activity">
    <reaction evidence="1">
        <text>Cleavage of peptide bonds with very broad specificity.</text>
        <dbReference type="EC" id="3.4.25.1"/>
    </reaction>
</comment>
<comment type="activity regulation">
    <text evidence="1">The formation of the proteasomal ATPase PAN-20S proteasome complex, via the docking of the C-termini of PAN into the intersubunit pockets in the alpha-rings, triggers opening of the gate for substrate entry. Interconversion between the open-gate and close-gate conformations leads to a dynamic regulation of the 20S proteasome proteolysis activity.</text>
</comment>
<comment type="subunit">
    <text evidence="1">The 20S proteasome core is composed of 14 alpha and 14 beta subunits that assemble into four stacked heptameric rings, resulting in a barrel-shaped structure. The two inner rings, each composed of seven catalytic beta subunits, are sandwiched by two outer rings, each composed of seven alpha subunits. The catalytic chamber with the active sites is on the inside of the barrel. Has a gated structure, the ends of the cylinder being occluded by the N-termini of the alpha-subunits. Is capped at one or both ends by the proteasome regulatory ATPase, PAN.</text>
</comment>
<comment type="subcellular location">
    <subcellularLocation>
        <location evidence="1">Cytoplasm</location>
    </subcellularLocation>
</comment>
<comment type="similarity">
    <text evidence="1">Belongs to the peptidase T1B family.</text>
</comment>
<dbReference type="EC" id="3.4.25.1" evidence="1"/>
<dbReference type="EMBL" id="AE009950">
    <property type="protein sequence ID" value="AAL80283.1"/>
    <property type="molecule type" value="Genomic_DNA"/>
</dbReference>
<dbReference type="SMR" id="Q8U4C9"/>
<dbReference type="STRING" id="186497.PF0159"/>
<dbReference type="MEROPS" id="T01.002"/>
<dbReference type="PaxDb" id="186497-PF0159"/>
<dbReference type="KEGG" id="pfu:PF0159"/>
<dbReference type="PATRIC" id="fig|186497.12.peg.165"/>
<dbReference type="eggNOG" id="arCOG00970">
    <property type="taxonomic scope" value="Archaea"/>
</dbReference>
<dbReference type="HOGENOM" id="CLU_035750_7_2_2"/>
<dbReference type="OrthoDB" id="6330at2157"/>
<dbReference type="PhylomeDB" id="Q8U4C9"/>
<dbReference type="Proteomes" id="UP000001013">
    <property type="component" value="Chromosome"/>
</dbReference>
<dbReference type="GO" id="GO:0005737">
    <property type="term" value="C:cytoplasm"/>
    <property type="evidence" value="ECO:0007669"/>
    <property type="project" value="UniProtKB-SubCell"/>
</dbReference>
<dbReference type="GO" id="GO:0019774">
    <property type="term" value="C:proteasome core complex, beta-subunit complex"/>
    <property type="evidence" value="ECO:0007669"/>
    <property type="project" value="UniProtKB-UniRule"/>
</dbReference>
<dbReference type="GO" id="GO:0004298">
    <property type="term" value="F:threonine-type endopeptidase activity"/>
    <property type="evidence" value="ECO:0007669"/>
    <property type="project" value="UniProtKB-UniRule"/>
</dbReference>
<dbReference type="GO" id="GO:0010498">
    <property type="term" value="P:proteasomal protein catabolic process"/>
    <property type="evidence" value="ECO:0007669"/>
    <property type="project" value="UniProtKB-UniRule"/>
</dbReference>
<dbReference type="CDD" id="cd03764">
    <property type="entry name" value="proteasome_beta_archeal"/>
    <property type="match status" value="1"/>
</dbReference>
<dbReference type="FunFam" id="3.60.20.10:FF:000049">
    <property type="entry name" value="Proteasome subunit beta"/>
    <property type="match status" value="1"/>
</dbReference>
<dbReference type="Gene3D" id="3.60.20.10">
    <property type="entry name" value="Glutamine Phosphoribosylpyrophosphate, subunit 1, domain 1"/>
    <property type="match status" value="1"/>
</dbReference>
<dbReference type="HAMAP" id="MF_02113_A">
    <property type="entry name" value="Proteasome_B_A"/>
    <property type="match status" value="1"/>
</dbReference>
<dbReference type="InterPro" id="IPR029055">
    <property type="entry name" value="Ntn_hydrolases_N"/>
</dbReference>
<dbReference type="InterPro" id="IPR019983">
    <property type="entry name" value="Pept_T1A_Psome_bsu_arc"/>
</dbReference>
<dbReference type="InterPro" id="IPR000243">
    <property type="entry name" value="Pept_T1A_subB"/>
</dbReference>
<dbReference type="InterPro" id="IPR016050">
    <property type="entry name" value="Proteasome_bsu_CS"/>
</dbReference>
<dbReference type="InterPro" id="IPR001353">
    <property type="entry name" value="Proteasome_sua/b"/>
</dbReference>
<dbReference type="InterPro" id="IPR023333">
    <property type="entry name" value="Proteasome_suB-type"/>
</dbReference>
<dbReference type="NCBIfam" id="TIGR03634">
    <property type="entry name" value="arc_protsome_B"/>
    <property type="match status" value="1"/>
</dbReference>
<dbReference type="PANTHER" id="PTHR32194:SF0">
    <property type="entry name" value="ATP-DEPENDENT PROTEASE SUBUNIT HSLV"/>
    <property type="match status" value="1"/>
</dbReference>
<dbReference type="PANTHER" id="PTHR32194">
    <property type="entry name" value="METALLOPROTEASE TLDD"/>
    <property type="match status" value="1"/>
</dbReference>
<dbReference type="Pfam" id="PF00227">
    <property type="entry name" value="Proteasome"/>
    <property type="match status" value="1"/>
</dbReference>
<dbReference type="PRINTS" id="PR00141">
    <property type="entry name" value="PROTEASOME"/>
</dbReference>
<dbReference type="SUPFAM" id="SSF56235">
    <property type="entry name" value="N-terminal nucleophile aminohydrolases (Ntn hydrolases)"/>
    <property type="match status" value="1"/>
</dbReference>
<dbReference type="PROSITE" id="PS00854">
    <property type="entry name" value="PROTEASOME_BETA_1"/>
    <property type="match status" value="1"/>
</dbReference>
<dbReference type="PROSITE" id="PS51476">
    <property type="entry name" value="PROTEASOME_BETA_2"/>
    <property type="match status" value="1"/>
</dbReference>
<evidence type="ECO:0000255" key="1">
    <source>
        <dbReference type="HAMAP-Rule" id="MF_02113"/>
    </source>
</evidence>
<keyword id="KW-0068">Autocatalytic cleavage</keyword>
<keyword id="KW-0963">Cytoplasm</keyword>
<keyword id="KW-0378">Hydrolase</keyword>
<keyword id="KW-0645">Protease</keyword>
<keyword id="KW-0647">Proteasome</keyword>
<keyword id="KW-1185">Reference proteome</keyword>
<keyword id="KW-0888">Threonine protease</keyword>
<keyword id="KW-0865">Zymogen</keyword>
<accession>Q8U4C9</accession>
<gene>
    <name evidence="1" type="primary">psmB1</name>
    <name type="ordered locus">PF0159</name>
</gene>
<sequence>MEKKTGTTTVGIKVKDGVVLAADTQASLDHMVETLNIKKIIPITDRIAITTAGSVGDVQMLARYLEAEARYYYFTWGRPMTTKAMANLLSNILNENRWFPYLVQIIIGGYVDEPTIANLDPFGGLIFDDYTATGSGTPFAIAVLEEGYREDLTIEEAKELAIRAVRAAGRRDVYTGSKKVQVVTITKDGMKEEFVV</sequence>
<feature type="propeptide" id="PRO_0000397410" description="Removed in mature form; by autocatalysis" evidence="1">
    <location>
        <begin position="1"/>
        <end position="6"/>
    </location>
</feature>
<feature type="chain" id="PRO_0000397411" description="Proteasome subunit beta 1">
    <location>
        <begin position="7"/>
        <end position="196"/>
    </location>
</feature>
<feature type="active site" description="Nucleophile" evidence="1">
    <location>
        <position position="7"/>
    </location>
</feature>
<reference key="1">
    <citation type="journal article" date="1999" name="Genetics">
        <title>Divergence of the hyperthermophilic archaea Pyrococcus furiosus and P. horikoshii inferred from complete genomic sequences.</title>
        <authorList>
            <person name="Maeder D.L."/>
            <person name="Weiss R.B."/>
            <person name="Dunn D.M."/>
            <person name="Cherry J.L."/>
            <person name="Gonzalez J.M."/>
            <person name="DiRuggiero J."/>
            <person name="Robb F.T."/>
        </authorList>
    </citation>
    <scope>NUCLEOTIDE SEQUENCE [LARGE SCALE GENOMIC DNA]</scope>
    <source>
        <strain>ATCC 43587 / DSM 3638 / JCM 8422 / Vc1</strain>
    </source>
</reference>
<name>PSB1_PYRFU</name>
<protein>
    <recommendedName>
        <fullName evidence="1">Proteasome subunit beta 1</fullName>
        <ecNumber evidence="1">3.4.25.1</ecNumber>
    </recommendedName>
    <alternativeName>
        <fullName evidence="1">20S proteasome beta subunit 1</fullName>
    </alternativeName>
    <alternativeName>
        <fullName evidence="1">Proteasome core protein PsmB 1</fullName>
    </alternativeName>
</protein>